<sequence length="132" mass="15094">MGRDTIADIITSIRNADMGTKGMVRIASTNITENIVKILLREGFIENVRKHRESNKYFLVSTLRHRRNRKGTYRNILKRISRPGLRIYSNYQGIPRILGGMGVVILSTSRGIMTDREARLEGIGGEILCYIW</sequence>
<evidence type="ECO:0000250" key="1"/>
<evidence type="ECO:0000305" key="2"/>
<accession>A6MMY0</accession>
<gene>
    <name type="primary">rps8</name>
</gene>
<organism>
    <name type="scientific">Illicium oligandrum</name>
    <name type="common">Star anise</name>
    <dbReference type="NCBI Taxonomy" id="145286"/>
    <lineage>
        <taxon>Eukaryota</taxon>
        <taxon>Viridiplantae</taxon>
        <taxon>Streptophyta</taxon>
        <taxon>Embryophyta</taxon>
        <taxon>Tracheophyta</taxon>
        <taxon>Spermatophyta</taxon>
        <taxon>Magnoliopsida</taxon>
        <taxon>Austrobaileyales</taxon>
        <taxon>Schisandraceae</taxon>
        <taxon>Illicium</taxon>
    </lineage>
</organism>
<proteinExistence type="inferred from homology"/>
<name>RR8_ILLOL</name>
<feature type="chain" id="PRO_0000305779" description="Small ribosomal subunit protein uS8c">
    <location>
        <begin position="1"/>
        <end position="132"/>
    </location>
</feature>
<geneLocation type="chloroplast"/>
<keyword id="KW-0150">Chloroplast</keyword>
<keyword id="KW-0934">Plastid</keyword>
<keyword id="KW-0687">Ribonucleoprotein</keyword>
<keyword id="KW-0689">Ribosomal protein</keyword>
<keyword id="KW-0694">RNA-binding</keyword>
<keyword id="KW-0699">rRNA-binding</keyword>
<protein>
    <recommendedName>
        <fullName evidence="2">Small ribosomal subunit protein uS8c</fullName>
    </recommendedName>
    <alternativeName>
        <fullName>30S ribosomal protein S8, chloroplastic</fullName>
    </alternativeName>
</protein>
<reference key="1">
    <citation type="journal article" date="2007" name="Mol. Phylogenet. Evol.">
        <title>Phylogenetic and evolutionary implications of complete chloroplast genome sequences of four early-diverging angiosperms: Buxus (Buxaceae), Chloranthus (Chloranthaceae), Dioscorea (Dioscoreaceae), and Illicium (Schisandraceae).</title>
        <authorList>
            <person name="Hansen D.R."/>
            <person name="Dastidar S.G."/>
            <person name="Cai Z."/>
            <person name="Penaflor C."/>
            <person name="Kuehl J.V."/>
            <person name="Boore J.L."/>
            <person name="Jansen R.K."/>
        </authorList>
    </citation>
    <scope>NUCLEOTIDE SEQUENCE [LARGE SCALE GENOMIC DNA]</scope>
</reference>
<comment type="function">
    <text evidence="1">One of the primary rRNA binding proteins, it binds directly to 16S rRNA central domain where it helps coordinate assembly of the platform of the 30S subunit.</text>
</comment>
<comment type="subunit">
    <text evidence="1">Part of the 30S ribosomal subunit.</text>
</comment>
<comment type="subcellular location">
    <subcellularLocation>
        <location>Plastid</location>
        <location>Chloroplast</location>
    </subcellularLocation>
</comment>
<comment type="similarity">
    <text evidence="2">Belongs to the universal ribosomal protein uS8 family.</text>
</comment>
<dbReference type="EMBL" id="EF380354">
    <property type="protein sequence ID" value="ABQ52554.1"/>
    <property type="molecule type" value="Genomic_DNA"/>
</dbReference>
<dbReference type="RefSeq" id="YP_001294306.1">
    <property type="nucleotide sequence ID" value="NC_009600.1"/>
</dbReference>
<dbReference type="SMR" id="A6MMY0"/>
<dbReference type="GeneID" id="5236754"/>
<dbReference type="GO" id="GO:0009507">
    <property type="term" value="C:chloroplast"/>
    <property type="evidence" value="ECO:0007669"/>
    <property type="project" value="UniProtKB-SubCell"/>
</dbReference>
<dbReference type="GO" id="GO:1990904">
    <property type="term" value="C:ribonucleoprotein complex"/>
    <property type="evidence" value="ECO:0007669"/>
    <property type="project" value="UniProtKB-KW"/>
</dbReference>
<dbReference type="GO" id="GO:0005840">
    <property type="term" value="C:ribosome"/>
    <property type="evidence" value="ECO:0007669"/>
    <property type="project" value="UniProtKB-KW"/>
</dbReference>
<dbReference type="GO" id="GO:0019843">
    <property type="term" value="F:rRNA binding"/>
    <property type="evidence" value="ECO:0007669"/>
    <property type="project" value="UniProtKB-UniRule"/>
</dbReference>
<dbReference type="GO" id="GO:0003735">
    <property type="term" value="F:structural constituent of ribosome"/>
    <property type="evidence" value="ECO:0007669"/>
    <property type="project" value="InterPro"/>
</dbReference>
<dbReference type="GO" id="GO:0006412">
    <property type="term" value="P:translation"/>
    <property type="evidence" value="ECO:0007669"/>
    <property type="project" value="UniProtKB-UniRule"/>
</dbReference>
<dbReference type="FunFam" id="3.30.1490.10:FF:000001">
    <property type="entry name" value="30S ribosomal protein S8"/>
    <property type="match status" value="1"/>
</dbReference>
<dbReference type="FunFam" id="3.30.1370.30:FF:000004">
    <property type="entry name" value="30S ribosomal protein S8, chloroplastic"/>
    <property type="match status" value="1"/>
</dbReference>
<dbReference type="Gene3D" id="3.30.1370.30">
    <property type="match status" value="1"/>
</dbReference>
<dbReference type="Gene3D" id="3.30.1490.10">
    <property type="match status" value="1"/>
</dbReference>
<dbReference type="HAMAP" id="MF_01302_B">
    <property type="entry name" value="Ribosomal_uS8_B"/>
    <property type="match status" value="1"/>
</dbReference>
<dbReference type="InterPro" id="IPR000630">
    <property type="entry name" value="Ribosomal_uS8"/>
</dbReference>
<dbReference type="InterPro" id="IPR047863">
    <property type="entry name" value="Ribosomal_uS8_CS"/>
</dbReference>
<dbReference type="InterPro" id="IPR035987">
    <property type="entry name" value="Ribosomal_uS8_sf"/>
</dbReference>
<dbReference type="NCBIfam" id="NF001109">
    <property type="entry name" value="PRK00136.1"/>
    <property type="match status" value="1"/>
</dbReference>
<dbReference type="PANTHER" id="PTHR11758">
    <property type="entry name" value="40S RIBOSOMAL PROTEIN S15A"/>
    <property type="match status" value="1"/>
</dbReference>
<dbReference type="Pfam" id="PF00410">
    <property type="entry name" value="Ribosomal_S8"/>
    <property type="match status" value="1"/>
</dbReference>
<dbReference type="SUPFAM" id="SSF56047">
    <property type="entry name" value="Ribosomal protein S8"/>
    <property type="match status" value="1"/>
</dbReference>
<dbReference type="PROSITE" id="PS00053">
    <property type="entry name" value="RIBOSOMAL_S8"/>
    <property type="match status" value="1"/>
</dbReference>